<dbReference type="EC" id="3.1.-.-" evidence="1"/>
<dbReference type="EMBL" id="KJ728786">
    <property type="protein sequence ID" value="AIA58903.1"/>
    <property type="molecule type" value="Genomic_DNA"/>
</dbReference>
<dbReference type="SMR" id="A0A068ACU9"/>
<dbReference type="ESTHER" id="eupbr-bref2">
    <property type="family name" value="Thiohydrolase"/>
</dbReference>
<dbReference type="GO" id="GO:0016787">
    <property type="term" value="F:hydrolase activity"/>
    <property type="evidence" value="ECO:0007669"/>
    <property type="project" value="UniProtKB-KW"/>
</dbReference>
<dbReference type="GO" id="GO:0017000">
    <property type="term" value="P:antibiotic biosynthetic process"/>
    <property type="evidence" value="ECO:0007669"/>
    <property type="project" value="UniProtKB-ARBA"/>
</dbReference>
<dbReference type="GO" id="GO:0072330">
    <property type="term" value="P:monocarboxylic acid biosynthetic process"/>
    <property type="evidence" value="ECO:0007669"/>
    <property type="project" value="UniProtKB-ARBA"/>
</dbReference>
<dbReference type="Gene3D" id="1.10.10.800">
    <property type="match status" value="1"/>
</dbReference>
<dbReference type="Gene3D" id="3.40.50.1820">
    <property type="entry name" value="alpha/beta hydrolase"/>
    <property type="match status" value="1"/>
</dbReference>
<dbReference type="InterPro" id="IPR029058">
    <property type="entry name" value="AB_hydrolase_fold"/>
</dbReference>
<dbReference type="InterPro" id="IPR022742">
    <property type="entry name" value="Hydrolase_4"/>
</dbReference>
<dbReference type="InterPro" id="IPR051411">
    <property type="entry name" value="Polyketide_trans_af380"/>
</dbReference>
<dbReference type="PANTHER" id="PTHR47751:SF2">
    <property type="entry name" value="DLTD N-TERMINAL DOMAIN PROTEIN (AFU_ORTHOLOGUE AFUA_8G00380)-RELATED"/>
    <property type="match status" value="1"/>
</dbReference>
<dbReference type="PANTHER" id="PTHR47751">
    <property type="entry name" value="SUPERFAMILY HYDROLASE, PUTATIVE (AFU_ORTHOLOGUE AFUA_2G16580)-RELATED"/>
    <property type="match status" value="1"/>
</dbReference>
<dbReference type="Pfam" id="PF12146">
    <property type="entry name" value="Hydrolase_4"/>
    <property type="match status" value="1"/>
</dbReference>
<dbReference type="SUPFAM" id="SSF53474">
    <property type="entry name" value="alpha/beta-Hydrolases"/>
    <property type="match status" value="1"/>
</dbReference>
<name>BREF2_EUPBR</name>
<evidence type="ECO:0000269" key="1">
    <source>
    </source>
</evidence>
<evidence type="ECO:0000303" key="2">
    <source>
    </source>
</evidence>
<evidence type="ECO:0000305" key="3"/>
<accession>A0A068ACU9</accession>
<sequence>MPGRELAPRQNVEFQTLDGLTLRGWLFPAQSRGPAVIITPGFNCVKEMFVSEVAESFQHSDVTALVYDPRTLGDSGGLPRNNIDPLAQVSDYSDALTFLKTLPIVDQTNISFWGMSFSALVALNAAALDKRARCCIAVCPLTGMQPEPDMLPKVLARCMQDRESQVVGNPPVTISVLTEQGRNPAGMGIGADKMEYDYMVNAKFRGAPNYENRTTLQSYYKMMAWQPFEIMKYLSKTRVLMIIPENDTISPADKQQVLFDGLPEPKTAHIAKGKGHLDVLSGADYEILAEMQAYFIKGPRGKGNAPSA</sequence>
<feature type="chain" id="PRO_0000444930" description="Thiohydrolase">
    <location>
        <begin position="1"/>
        <end position="308"/>
    </location>
</feature>
<reference key="1">
    <citation type="journal article" date="2014" name="ACS Chem. Biol.">
        <title>Fungal polyketide synthase product chain-length control by partnering thiohydrolase.</title>
        <authorList>
            <person name="Zabala A.O."/>
            <person name="Chooi Y.H."/>
            <person name="Choi M.S."/>
            <person name="Lin H.C."/>
            <person name="Tang Y."/>
        </authorList>
    </citation>
    <scope>NUCLEOTIDE SEQUENCE [GENOMIC DNA]</scope>
    <scope>INDUCTION</scope>
    <scope>FUNCTION</scope>
    <scope>CATALYTIC ACTIVITY</scope>
    <scope>PATHWAY</scope>
    <source>
        <strain>ATCC 58665</strain>
    </source>
</reference>
<comment type="function">
    <text evidence="1">Thiohydrolase; part of the gene cluster that mediates the biosynthesis of brefeldin A (BFA), a protein transport inhibitor that shows antiviral, antifungal, and antitumor properties (PubMed:24845309). The proposed biosynthesis of BFA involves formation of an acyclic polyketide chain that is differentially tailored throughout the backbone (PubMed:24845309). The highly reducing polyketide synthase Bref-PKS is proposed to synthesize the precisely reduced octaketide precursor, which could then be directly offloaded by the thiohydrolase enzyme Bref-TH followed by a cytochrome P450 monooxygenase-mediated formation of the cyclopentane ring and macrocyclization to afford 7-deoxy BFA. Alternatively, the first ring annulation can also occur on the ACP-tethered intermediate before the thiohydrolase release and lactonization (PubMed:24845309). The C7-hydroxylation by another cytochrome P450 monooxygenase is believed to be the final step in the process to obtain the final structure of BFA (PubMed:24845309). In addition to the HRPKS Bref-PKS and the thiohydrolase Bref-TH, the brefeldin A biosynthesis cluster contains 4 cytochrome p450 monooxygenases (called orf3 to orf6), as well a the probable cluster-specific transcription regulator orf8 (PubMed:24845309).</text>
</comment>
<comment type="pathway">
    <text evidence="1">Mycotoxin biosynthesis.</text>
</comment>
<comment type="induction">
    <text evidence="1">Coexpressed with the other cluster genes on brefeldin A production optimized medium.</text>
</comment>
<comment type="similarity">
    <text evidence="3">Belongs to the polyketide transferase af380 family.</text>
</comment>
<protein>
    <recommendedName>
        <fullName evidence="2">Thiohydrolase</fullName>
        <shortName evidence="2">TH</shortName>
        <ecNumber evidence="1">3.1.-.-</ecNumber>
    </recommendedName>
    <alternativeName>
        <fullName evidence="2">Brefeldin A biosynthesis cluster protein Bref-TH</fullName>
    </alternativeName>
</protein>
<keyword id="KW-0378">Hydrolase</keyword>
<keyword id="KW-0843">Virulence</keyword>
<organism>
    <name type="scientific">Eupenicillium brefeldianum</name>
    <name type="common">Penicillium brefeldianum</name>
    <dbReference type="NCBI Taxonomy" id="1131482"/>
    <lineage>
        <taxon>Eukaryota</taxon>
        <taxon>Fungi</taxon>
        <taxon>Dikarya</taxon>
        <taxon>Ascomycota</taxon>
        <taxon>Pezizomycotina</taxon>
        <taxon>Eurotiomycetes</taxon>
        <taxon>Eurotiomycetidae</taxon>
        <taxon>Eurotiales</taxon>
        <taxon>Aspergillaceae</taxon>
        <taxon>Penicillium</taxon>
    </lineage>
</organism>
<proteinExistence type="evidence at protein level"/>
<gene>
    <name evidence="2" type="primary">Bref-TH</name>
    <name evidence="2" type="synonym">orf2</name>
</gene>